<gene>
    <name evidence="1" type="primary">pyrB</name>
    <name type="ordered locus">MRA_1389</name>
</gene>
<feature type="chain" id="PRO_0000301592" description="Aspartate carbamoyltransferase catalytic subunit">
    <location>
        <begin position="1"/>
        <end position="319"/>
    </location>
</feature>
<feature type="binding site" evidence="1">
    <location>
        <position position="57"/>
    </location>
    <ligand>
        <name>carbamoyl phosphate</name>
        <dbReference type="ChEBI" id="CHEBI:58228"/>
    </ligand>
</feature>
<feature type="binding site" evidence="1">
    <location>
        <position position="58"/>
    </location>
    <ligand>
        <name>carbamoyl phosphate</name>
        <dbReference type="ChEBI" id="CHEBI:58228"/>
    </ligand>
</feature>
<feature type="binding site" evidence="1">
    <location>
        <position position="85"/>
    </location>
    <ligand>
        <name>L-aspartate</name>
        <dbReference type="ChEBI" id="CHEBI:29991"/>
    </ligand>
</feature>
<feature type="binding site" evidence="1">
    <location>
        <position position="107"/>
    </location>
    <ligand>
        <name>carbamoyl phosphate</name>
        <dbReference type="ChEBI" id="CHEBI:58228"/>
    </ligand>
</feature>
<feature type="binding site" evidence="1">
    <location>
        <position position="140"/>
    </location>
    <ligand>
        <name>carbamoyl phosphate</name>
        <dbReference type="ChEBI" id="CHEBI:58228"/>
    </ligand>
</feature>
<feature type="binding site" evidence="1">
    <location>
        <position position="143"/>
    </location>
    <ligand>
        <name>carbamoyl phosphate</name>
        <dbReference type="ChEBI" id="CHEBI:58228"/>
    </ligand>
</feature>
<feature type="binding site" evidence="1">
    <location>
        <position position="173"/>
    </location>
    <ligand>
        <name>L-aspartate</name>
        <dbReference type="ChEBI" id="CHEBI:29991"/>
    </ligand>
</feature>
<feature type="binding site" evidence="1">
    <location>
        <position position="227"/>
    </location>
    <ligand>
        <name>L-aspartate</name>
        <dbReference type="ChEBI" id="CHEBI:29991"/>
    </ligand>
</feature>
<feature type="binding site" evidence="1">
    <location>
        <position position="268"/>
    </location>
    <ligand>
        <name>carbamoyl phosphate</name>
        <dbReference type="ChEBI" id="CHEBI:58228"/>
    </ligand>
</feature>
<feature type="binding site" evidence="1">
    <location>
        <position position="269"/>
    </location>
    <ligand>
        <name>carbamoyl phosphate</name>
        <dbReference type="ChEBI" id="CHEBI:58228"/>
    </ligand>
</feature>
<keyword id="KW-0665">Pyrimidine biosynthesis</keyword>
<keyword id="KW-1185">Reference proteome</keyword>
<keyword id="KW-0808">Transferase</keyword>
<organism>
    <name type="scientific">Mycobacterium tuberculosis (strain ATCC 25177 / H37Ra)</name>
    <dbReference type="NCBI Taxonomy" id="419947"/>
    <lineage>
        <taxon>Bacteria</taxon>
        <taxon>Bacillati</taxon>
        <taxon>Actinomycetota</taxon>
        <taxon>Actinomycetes</taxon>
        <taxon>Mycobacteriales</taxon>
        <taxon>Mycobacteriaceae</taxon>
        <taxon>Mycobacterium</taxon>
        <taxon>Mycobacterium tuberculosis complex</taxon>
    </lineage>
</organism>
<name>PYRB_MYCTA</name>
<sequence>MTPRHLLTAADLSRDDATAILDDADRFAQALVGRDIKKLPTLRGRTVVTMFYENSTRTRVSFEVAGKWMSADVINVSAAGSSVGKGESLRDTALTLRAAGADALIIRHPASGAAHLLAQWTGAHNDGPAVINAGDGTHEHPTQALLDALTIRQRLGGIEGRRIVIVGDILHSRVARSNVMLLDTLGAEVVLVAPPTLLPVGVTGWPATVSHDFDAELPAADAVLMLRVQAERMNGGFFPSVREYSVRYGLTERRQAMLPGHAVVLHPGPMVRGMEITSSVADSSQSAVLQQVSNGVQVRMAVLFHVLVGAQDAGKEGAA</sequence>
<evidence type="ECO:0000255" key="1">
    <source>
        <dbReference type="HAMAP-Rule" id="MF_00001"/>
    </source>
</evidence>
<proteinExistence type="inferred from homology"/>
<reference key="1">
    <citation type="journal article" date="2008" name="PLoS ONE">
        <title>Genetic basis of virulence attenuation revealed by comparative genomic analysis of Mycobacterium tuberculosis strain H37Ra versus H37Rv.</title>
        <authorList>
            <person name="Zheng H."/>
            <person name="Lu L."/>
            <person name="Wang B."/>
            <person name="Pu S."/>
            <person name="Zhang X."/>
            <person name="Zhu G."/>
            <person name="Shi W."/>
            <person name="Zhang L."/>
            <person name="Wang H."/>
            <person name="Wang S."/>
            <person name="Zhao G."/>
            <person name="Zhang Y."/>
        </authorList>
    </citation>
    <scope>NUCLEOTIDE SEQUENCE [LARGE SCALE GENOMIC DNA]</scope>
    <source>
        <strain>ATCC 25177 / H37Ra</strain>
    </source>
</reference>
<protein>
    <recommendedName>
        <fullName evidence="1">Aspartate carbamoyltransferase catalytic subunit</fullName>
        <ecNumber evidence="1">2.1.3.2</ecNumber>
    </recommendedName>
    <alternativeName>
        <fullName evidence="1">Aspartate transcarbamylase</fullName>
        <shortName evidence="1">ATCase</shortName>
    </alternativeName>
</protein>
<accession>A5U282</accession>
<dbReference type="EC" id="2.1.3.2" evidence="1"/>
<dbReference type="EMBL" id="CP000611">
    <property type="protein sequence ID" value="ABQ73132.1"/>
    <property type="molecule type" value="Genomic_DNA"/>
</dbReference>
<dbReference type="RefSeq" id="WP_003407200.1">
    <property type="nucleotide sequence ID" value="NZ_CP016972.1"/>
</dbReference>
<dbReference type="SMR" id="A5U282"/>
<dbReference type="KEGG" id="mra:MRA_1389"/>
<dbReference type="eggNOG" id="COG0540">
    <property type="taxonomic scope" value="Bacteria"/>
</dbReference>
<dbReference type="HOGENOM" id="CLU_043846_2_0_11"/>
<dbReference type="UniPathway" id="UPA00070">
    <property type="reaction ID" value="UER00116"/>
</dbReference>
<dbReference type="Proteomes" id="UP000001988">
    <property type="component" value="Chromosome"/>
</dbReference>
<dbReference type="GO" id="GO:0005829">
    <property type="term" value="C:cytosol"/>
    <property type="evidence" value="ECO:0007669"/>
    <property type="project" value="TreeGrafter"/>
</dbReference>
<dbReference type="GO" id="GO:0016597">
    <property type="term" value="F:amino acid binding"/>
    <property type="evidence" value="ECO:0007669"/>
    <property type="project" value="InterPro"/>
</dbReference>
<dbReference type="GO" id="GO:0004070">
    <property type="term" value="F:aspartate carbamoyltransferase activity"/>
    <property type="evidence" value="ECO:0007669"/>
    <property type="project" value="UniProtKB-UniRule"/>
</dbReference>
<dbReference type="GO" id="GO:0006207">
    <property type="term" value="P:'de novo' pyrimidine nucleobase biosynthetic process"/>
    <property type="evidence" value="ECO:0007669"/>
    <property type="project" value="InterPro"/>
</dbReference>
<dbReference type="GO" id="GO:0044205">
    <property type="term" value="P:'de novo' UMP biosynthetic process"/>
    <property type="evidence" value="ECO:0007669"/>
    <property type="project" value="UniProtKB-UniRule"/>
</dbReference>
<dbReference type="GO" id="GO:0006520">
    <property type="term" value="P:amino acid metabolic process"/>
    <property type="evidence" value="ECO:0007669"/>
    <property type="project" value="InterPro"/>
</dbReference>
<dbReference type="FunFam" id="3.40.50.1370:FF:000007">
    <property type="entry name" value="Aspartate carbamoyltransferase"/>
    <property type="match status" value="1"/>
</dbReference>
<dbReference type="FunFam" id="3.40.50.1370:FF:000012">
    <property type="entry name" value="Aspartate carbamoyltransferase"/>
    <property type="match status" value="1"/>
</dbReference>
<dbReference type="Gene3D" id="3.40.50.1370">
    <property type="entry name" value="Aspartate/ornithine carbamoyltransferase"/>
    <property type="match status" value="2"/>
</dbReference>
<dbReference type="HAMAP" id="MF_00001">
    <property type="entry name" value="Asp_carb_tr"/>
    <property type="match status" value="1"/>
</dbReference>
<dbReference type="InterPro" id="IPR006132">
    <property type="entry name" value="Asp/Orn_carbamoyltranf_P-bd"/>
</dbReference>
<dbReference type="InterPro" id="IPR006130">
    <property type="entry name" value="Asp/Orn_carbamoylTrfase"/>
</dbReference>
<dbReference type="InterPro" id="IPR036901">
    <property type="entry name" value="Asp/Orn_carbamoylTrfase_sf"/>
</dbReference>
<dbReference type="InterPro" id="IPR002082">
    <property type="entry name" value="Asp_carbamoyltransf"/>
</dbReference>
<dbReference type="InterPro" id="IPR006131">
    <property type="entry name" value="Asp_carbamoyltransf_Asp/Orn-bd"/>
</dbReference>
<dbReference type="NCBIfam" id="TIGR00670">
    <property type="entry name" value="asp_carb_tr"/>
    <property type="match status" value="1"/>
</dbReference>
<dbReference type="NCBIfam" id="NF002032">
    <property type="entry name" value="PRK00856.1"/>
    <property type="match status" value="1"/>
</dbReference>
<dbReference type="PANTHER" id="PTHR45753:SF6">
    <property type="entry name" value="ASPARTATE CARBAMOYLTRANSFERASE"/>
    <property type="match status" value="1"/>
</dbReference>
<dbReference type="PANTHER" id="PTHR45753">
    <property type="entry name" value="ORNITHINE CARBAMOYLTRANSFERASE, MITOCHONDRIAL"/>
    <property type="match status" value="1"/>
</dbReference>
<dbReference type="Pfam" id="PF00185">
    <property type="entry name" value="OTCace"/>
    <property type="match status" value="1"/>
</dbReference>
<dbReference type="Pfam" id="PF02729">
    <property type="entry name" value="OTCace_N"/>
    <property type="match status" value="1"/>
</dbReference>
<dbReference type="PRINTS" id="PR00100">
    <property type="entry name" value="AOTCASE"/>
</dbReference>
<dbReference type="PRINTS" id="PR00101">
    <property type="entry name" value="ATCASE"/>
</dbReference>
<dbReference type="SUPFAM" id="SSF53671">
    <property type="entry name" value="Aspartate/ornithine carbamoyltransferase"/>
    <property type="match status" value="1"/>
</dbReference>
<dbReference type="PROSITE" id="PS00097">
    <property type="entry name" value="CARBAMOYLTRANSFERASE"/>
    <property type="match status" value="1"/>
</dbReference>
<comment type="function">
    <text evidence="1">Catalyzes the condensation of carbamoyl phosphate and aspartate to form carbamoyl aspartate and inorganic phosphate, the committed step in the de novo pyrimidine nucleotide biosynthesis pathway.</text>
</comment>
<comment type="catalytic activity">
    <reaction evidence="1">
        <text>carbamoyl phosphate + L-aspartate = N-carbamoyl-L-aspartate + phosphate + H(+)</text>
        <dbReference type="Rhea" id="RHEA:20013"/>
        <dbReference type="ChEBI" id="CHEBI:15378"/>
        <dbReference type="ChEBI" id="CHEBI:29991"/>
        <dbReference type="ChEBI" id="CHEBI:32814"/>
        <dbReference type="ChEBI" id="CHEBI:43474"/>
        <dbReference type="ChEBI" id="CHEBI:58228"/>
        <dbReference type="EC" id="2.1.3.2"/>
    </reaction>
</comment>
<comment type="pathway">
    <text evidence="1">Pyrimidine metabolism; UMP biosynthesis via de novo pathway; (S)-dihydroorotate from bicarbonate: step 2/3.</text>
</comment>
<comment type="subunit">
    <text evidence="1">Heterododecamer (2C3:3R2) of six catalytic PyrB chains organized as two trimers (C3), and six regulatory PyrI chains organized as three dimers (R2).</text>
</comment>
<comment type="similarity">
    <text evidence="1">Belongs to the aspartate/ornithine carbamoyltransferase superfamily. ATCase family.</text>
</comment>